<protein>
    <recommendedName>
        <fullName evidence="1">Sec-independent protein translocase protein TatB</fullName>
    </recommendedName>
</protein>
<accession>Q3KJD1</accession>
<comment type="function">
    <text evidence="1">Part of the twin-arginine translocation (Tat) system that transports large folded proteins containing a characteristic twin-arginine motif in their signal peptide across membranes. Together with TatC, TatB is part of a receptor directly interacting with Tat signal peptides. TatB may form an oligomeric binding site that transiently accommodates folded Tat precursor proteins before their translocation.</text>
</comment>
<comment type="subunit">
    <text evidence="1">The Tat system comprises two distinct complexes: a TatABC complex, containing multiple copies of TatA, TatB and TatC subunits, and a separate TatA complex, containing only TatA subunits. Substrates initially bind to the TatABC complex, which probably triggers association of the separate TatA complex to form the active translocon.</text>
</comment>
<comment type="subcellular location">
    <subcellularLocation>
        <location evidence="1">Cell inner membrane</location>
        <topology evidence="1">Single-pass membrane protein</topology>
    </subcellularLocation>
</comment>
<comment type="similarity">
    <text evidence="1">Belongs to the TatB family.</text>
</comment>
<feature type="chain" id="PRO_0000301209" description="Sec-independent protein translocase protein TatB">
    <location>
        <begin position="1"/>
        <end position="148"/>
    </location>
</feature>
<feature type="transmembrane region" description="Helical" evidence="1">
    <location>
        <begin position="1"/>
        <end position="21"/>
    </location>
</feature>
<feature type="region of interest" description="Disordered" evidence="2">
    <location>
        <begin position="85"/>
        <end position="148"/>
    </location>
</feature>
<feature type="compositionally biased region" description="Low complexity" evidence="2">
    <location>
        <begin position="107"/>
        <end position="148"/>
    </location>
</feature>
<evidence type="ECO:0000255" key="1">
    <source>
        <dbReference type="HAMAP-Rule" id="MF_00237"/>
    </source>
</evidence>
<evidence type="ECO:0000256" key="2">
    <source>
        <dbReference type="SAM" id="MobiDB-lite"/>
    </source>
</evidence>
<keyword id="KW-0997">Cell inner membrane</keyword>
<keyword id="KW-1003">Cell membrane</keyword>
<keyword id="KW-0472">Membrane</keyword>
<keyword id="KW-0653">Protein transport</keyword>
<keyword id="KW-0811">Translocation</keyword>
<keyword id="KW-0812">Transmembrane</keyword>
<keyword id="KW-1133">Transmembrane helix</keyword>
<keyword id="KW-0813">Transport</keyword>
<gene>
    <name evidence="1" type="primary">tatB</name>
    <name type="ordered locus">Pfl01_0381</name>
</gene>
<organism>
    <name type="scientific">Pseudomonas fluorescens (strain Pf0-1)</name>
    <dbReference type="NCBI Taxonomy" id="205922"/>
    <lineage>
        <taxon>Bacteria</taxon>
        <taxon>Pseudomonadati</taxon>
        <taxon>Pseudomonadota</taxon>
        <taxon>Gammaproteobacteria</taxon>
        <taxon>Pseudomonadales</taxon>
        <taxon>Pseudomonadaceae</taxon>
        <taxon>Pseudomonas</taxon>
    </lineage>
</organism>
<sequence>MFGISFSELLLVGLVALLVLGPERLPGAARTAGLWVGRLKRSFNAIKQEVEREIGADEIRRQLHNEHILSLEQEARKIFTPVQQEPTPVEHVGEQTIHSPAAPTPAAPAVAPTESAPVVAPASVEHVAQTAAPTTPAPNDTTQPPRAP</sequence>
<reference key="1">
    <citation type="journal article" date="2009" name="Genome Biol.">
        <title>Genomic and genetic analyses of diversity and plant interactions of Pseudomonas fluorescens.</title>
        <authorList>
            <person name="Silby M.W."/>
            <person name="Cerdeno-Tarraga A.M."/>
            <person name="Vernikos G.S."/>
            <person name="Giddens S.R."/>
            <person name="Jackson R.W."/>
            <person name="Preston G.M."/>
            <person name="Zhang X.-X."/>
            <person name="Moon C.D."/>
            <person name="Gehrig S.M."/>
            <person name="Godfrey S.A.C."/>
            <person name="Knight C.G."/>
            <person name="Malone J.G."/>
            <person name="Robinson Z."/>
            <person name="Spiers A.J."/>
            <person name="Harris S."/>
            <person name="Challis G.L."/>
            <person name="Yaxley A.M."/>
            <person name="Harris D."/>
            <person name="Seeger K."/>
            <person name="Murphy L."/>
            <person name="Rutter S."/>
            <person name="Squares R."/>
            <person name="Quail M.A."/>
            <person name="Saunders E."/>
            <person name="Mavromatis K."/>
            <person name="Brettin T.S."/>
            <person name="Bentley S.D."/>
            <person name="Hothersall J."/>
            <person name="Stephens E."/>
            <person name="Thomas C.M."/>
            <person name="Parkhill J."/>
            <person name="Levy S.B."/>
            <person name="Rainey P.B."/>
            <person name="Thomson N.R."/>
        </authorList>
    </citation>
    <scope>NUCLEOTIDE SEQUENCE [LARGE SCALE GENOMIC DNA]</scope>
    <source>
        <strain>Pf0-1</strain>
    </source>
</reference>
<proteinExistence type="inferred from homology"/>
<name>TATB_PSEPF</name>
<dbReference type="EMBL" id="CP000094">
    <property type="protein sequence ID" value="ABA72125.1"/>
    <property type="molecule type" value="Genomic_DNA"/>
</dbReference>
<dbReference type="RefSeq" id="WP_011332062.1">
    <property type="nucleotide sequence ID" value="NC_007492.2"/>
</dbReference>
<dbReference type="SMR" id="Q3KJD1"/>
<dbReference type="KEGG" id="pfo:Pfl01_0381"/>
<dbReference type="eggNOG" id="COG1826">
    <property type="taxonomic scope" value="Bacteria"/>
</dbReference>
<dbReference type="HOGENOM" id="CLU_086034_1_1_6"/>
<dbReference type="Proteomes" id="UP000002704">
    <property type="component" value="Chromosome"/>
</dbReference>
<dbReference type="GO" id="GO:0033281">
    <property type="term" value="C:TAT protein transport complex"/>
    <property type="evidence" value="ECO:0007669"/>
    <property type="project" value="UniProtKB-UniRule"/>
</dbReference>
<dbReference type="GO" id="GO:0008320">
    <property type="term" value="F:protein transmembrane transporter activity"/>
    <property type="evidence" value="ECO:0007669"/>
    <property type="project" value="UniProtKB-UniRule"/>
</dbReference>
<dbReference type="GO" id="GO:0043953">
    <property type="term" value="P:protein transport by the Tat complex"/>
    <property type="evidence" value="ECO:0007669"/>
    <property type="project" value="UniProtKB-UniRule"/>
</dbReference>
<dbReference type="Gene3D" id="1.20.5.3310">
    <property type="match status" value="1"/>
</dbReference>
<dbReference type="HAMAP" id="MF_00237">
    <property type="entry name" value="TatB"/>
    <property type="match status" value="1"/>
</dbReference>
<dbReference type="InterPro" id="IPR003369">
    <property type="entry name" value="TatA/B/E"/>
</dbReference>
<dbReference type="InterPro" id="IPR018448">
    <property type="entry name" value="TatB"/>
</dbReference>
<dbReference type="NCBIfam" id="TIGR01410">
    <property type="entry name" value="tatB"/>
    <property type="match status" value="1"/>
</dbReference>
<dbReference type="PANTHER" id="PTHR33162">
    <property type="entry name" value="SEC-INDEPENDENT PROTEIN TRANSLOCASE PROTEIN TATA, CHLOROPLASTIC"/>
    <property type="match status" value="1"/>
</dbReference>
<dbReference type="PANTHER" id="PTHR33162:SF1">
    <property type="entry name" value="SEC-INDEPENDENT PROTEIN TRANSLOCASE PROTEIN TATA, CHLOROPLASTIC"/>
    <property type="match status" value="1"/>
</dbReference>
<dbReference type="Pfam" id="PF02416">
    <property type="entry name" value="TatA_B_E"/>
    <property type="match status" value="1"/>
</dbReference>
<dbReference type="PRINTS" id="PR01506">
    <property type="entry name" value="TATBPROTEIN"/>
</dbReference>